<proteinExistence type="inferred from homology"/>
<sequence length="260" mass="27591">MRPAILLTNDDGVNSLGIWAAYEALSPIADVTVVAPATQQSAVGRSISIFEPIRANRIKINGNPAWAVGGKPTDAAIIGLYALKLAPALVVSGINIGENLSYESIMTSGTVGAALEAANQGTKGIAFSLQVEDQGDKFDDPGQSAQSFDAAKKVVRDVVERVLASGFPPAADVINVNIPSTIKGGYEVTHLARKLFHTGVEKRLDPRGRPYFWINGPLLEDAEEGTDVHAVRKGNVSITPITLDCTARTADEDTKKIFLK</sequence>
<reference key="1">
    <citation type="journal article" date="2015" name="Microbiology">
        <title>Genome of Methanoregula boonei 6A8 reveals adaptations to oligotrophic peatland environments.</title>
        <authorList>
            <person name="Braeuer S."/>
            <person name="Cadillo-Quiroz H."/>
            <person name="Kyrpides N."/>
            <person name="Woyke T."/>
            <person name="Goodwin L."/>
            <person name="Detter C."/>
            <person name="Podell S."/>
            <person name="Yavitt J.B."/>
            <person name="Zinder S.H."/>
        </authorList>
    </citation>
    <scope>NUCLEOTIDE SEQUENCE [LARGE SCALE GENOMIC DNA]</scope>
    <source>
        <strain>DSM 21154 / JCM 14090 / 6A8</strain>
    </source>
</reference>
<comment type="function">
    <text evidence="1">Nucleotidase that shows phosphatase activity on nucleoside 5'-monophosphates.</text>
</comment>
<comment type="catalytic activity">
    <reaction evidence="1">
        <text>a ribonucleoside 5'-phosphate + H2O = a ribonucleoside + phosphate</text>
        <dbReference type="Rhea" id="RHEA:12484"/>
        <dbReference type="ChEBI" id="CHEBI:15377"/>
        <dbReference type="ChEBI" id="CHEBI:18254"/>
        <dbReference type="ChEBI" id="CHEBI:43474"/>
        <dbReference type="ChEBI" id="CHEBI:58043"/>
        <dbReference type="EC" id="3.1.3.5"/>
    </reaction>
</comment>
<comment type="cofactor">
    <cofactor evidence="1">
        <name>a divalent metal cation</name>
        <dbReference type="ChEBI" id="CHEBI:60240"/>
    </cofactor>
    <text evidence="1">Binds 1 divalent metal cation per subunit.</text>
</comment>
<comment type="subcellular location">
    <subcellularLocation>
        <location evidence="1">Cytoplasm</location>
    </subcellularLocation>
</comment>
<comment type="similarity">
    <text evidence="1">Belongs to the SurE nucleotidase family.</text>
</comment>
<gene>
    <name evidence="1" type="primary">surE</name>
    <name type="ordered locus">Mboo_0919</name>
</gene>
<accession>A7I6S6</accession>
<evidence type="ECO:0000255" key="1">
    <source>
        <dbReference type="HAMAP-Rule" id="MF_00060"/>
    </source>
</evidence>
<organism>
    <name type="scientific">Methanoregula boonei (strain DSM 21154 / JCM 14090 / 6A8)</name>
    <dbReference type="NCBI Taxonomy" id="456442"/>
    <lineage>
        <taxon>Archaea</taxon>
        <taxon>Methanobacteriati</taxon>
        <taxon>Methanobacteriota</taxon>
        <taxon>Stenosarchaea group</taxon>
        <taxon>Methanomicrobia</taxon>
        <taxon>Methanomicrobiales</taxon>
        <taxon>Methanoregulaceae</taxon>
        <taxon>Methanoregula</taxon>
    </lineage>
</organism>
<feature type="chain" id="PRO_0000335298" description="5'-nucleotidase SurE">
    <location>
        <begin position="1"/>
        <end position="260"/>
    </location>
</feature>
<feature type="binding site" evidence="1">
    <location>
        <position position="10"/>
    </location>
    <ligand>
        <name>a divalent metal cation</name>
        <dbReference type="ChEBI" id="CHEBI:60240"/>
    </ligand>
</feature>
<feature type="binding site" evidence="1">
    <location>
        <position position="11"/>
    </location>
    <ligand>
        <name>a divalent metal cation</name>
        <dbReference type="ChEBI" id="CHEBI:60240"/>
    </ligand>
</feature>
<feature type="binding site" evidence="1">
    <location>
        <position position="41"/>
    </location>
    <ligand>
        <name>a divalent metal cation</name>
        <dbReference type="ChEBI" id="CHEBI:60240"/>
    </ligand>
</feature>
<feature type="binding site" evidence="1">
    <location>
        <position position="95"/>
    </location>
    <ligand>
        <name>a divalent metal cation</name>
        <dbReference type="ChEBI" id="CHEBI:60240"/>
    </ligand>
</feature>
<keyword id="KW-0963">Cytoplasm</keyword>
<keyword id="KW-0378">Hydrolase</keyword>
<keyword id="KW-0479">Metal-binding</keyword>
<keyword id="KW-0547">Nucleotide-binding</keyword>
<keyword id="KW-1185">Reference proteome</keyword>
<dbReference type="EC" id="3.1.3.5" evidence="1"/>
<dbReference type="EMBL" id="CP000780">
    <property type="protein sequence ID" value="ABS55437.1"/>
    <property type="molecule type" value="Genomic_DNA"/>
</dbReference>
<dbReference type="RefSeq" id="WP_012106462.1">
    <property type="nucleotide sequence ID" value="NC_009712.1"/>
</dbReference>
<dbReference type="SMR" id="A7I6S6"/>
<dbReference type="STRING" id="456442.Mboo_0919"/>
<dbReference type="GeneID" id="5410084"/>
<dbReference type="KEGG" id="mbn:Mboo_0919"/>
<dbReference type="eggNOG" id="arCOG02303">
    <property type="taxonomic scope" value="Archaea"/>
</dbReference>
<dbReference type="HOGENOM" id="CLU_045192_1_3_2"/>
<dbReference type="OrthoDB" id="26873at2157"/>
<dbReference type="Proteomes" id="UP000002408">
    <property type="component" value="Chromosome"/>
</dbReference>
<dbReference type="GO" id="GO:0005737">
    <property type="term" value="C:cytoplasm"/>
    <property type="evidence" value="ECO:0007669"/>
    <property type="project" value="UniProtKB-SubCell"/>
</dbReference>
<dbReference type="GO" id="GO:0008253">
    <property type="term" value="F:5'-nucleotidase activity"/>
    <property type="evidence" value="ECO:0007669"/>
    <property type="project" value="UniProtKB-UniRule"/>
</dbReference>
<dbReference type="GO" id="GO:0046872">
    <property type="term" value="F:metal ion binding"/>
    <property type="evidence" value="ECO:0007669"/>
    <property type="project" value="UniProtKB-UniRule"/>
</dbReference>
<dbReference type="GO" id="GO:0000166">
    <property type="term" value="F:nucleotide binding"/>
    <property type="evidence" value="ECO:0007669"/>
    <property type="project" value="UniProtKB-KW"/>
</dbReference>
<dbReference type="Gene3D" id="3.40.1210.10">
    <property type="entry name" value="Survival protein SurE-like phosphatase/nucleotidase"/>
    <property type="match status" value="1"/>
</dbReference>
<dbReference type="HAMAP" id="MF_00060">
    <property type="entry name" value="SurE"/>
    <property type="match status" value="1"/>
</dbReference>
<dbReference type="InterPro" id="IPR030048">
    <property type="entry name" value="SurE"/>
</dbReference>
<dbReference type="InterPro" id="IPR002828">
    <property type="entry name" value="SurE-like_Pase/nucleotidase"/>
</dbReference>
<dbReference type="InterPro" id="IPR036523">
    <property type="entry name" value="SurE-like_sf"/>
</dbReference>
<dbReference type="NCBIfam" id="NF001491">
    <property type="entry name" value="PRK00346.2-1"/>
    <property type="match status" value="1"/>
</dbReference>
<dbReference type="NCBIfam" id="TIGR00087">
    <property type="entry name" value="surE"/>
    <property type="match status" value="1"/>
</dbReference>
<dbReference type="PANTHER" id="PTHR30457">
    <property type="entry name" value="5'-NUCLEOTIDASE SURE"/>
    <property type="match status" value="1"/>
</dbReference>
<dbReference type="PANTHER" id="PTHR30457:SF0">
    <property type="entry name" value="PHOSPHATASE, PUTATIVE (AFU_ORTHOLOGUE AFUA_4G01070)-RELATED"/>
    <property type="match status" value="1"/>
</dbReference>
<dbReference type="Pfam" id="PF01975">
    <property type="entry name" value="SurE"/>
    <property type="match status" value="1"/>
</dbReference>
<dbReference type="SUPFAM" id="SSF64167">
    <property type="entry name" value="SurE-like"/>
    <property type="match status" value="1"/>
</dbReference>
<protein>
    <recommendedName>
        <fullName evidence="1">5'-nucleotidase SurE</fullName>
        <ecNumber evidence="1">3.1.3.5</ecNumber>
    </recommendedName>
    <alternativeName>
        <fullName evidence="1">Nucleoside 5'-monophosphate phosphohydrolase</fullName>
    </alternativeName>
</protein>
<name>SURE_METB6</name>